<accession>E1C3P4</accession>
<protein>
    <recommendedName>
        <fullName evidence="2">Cytosolic carboxypeptidase 1</fullName>
        <ecNumber evidence="2">3.4.17.-</ecNumber>
        <ecNumber evidence="2">3.4.17.24</ecNumber>
    </recommendedName>
    <alternativeName>
        <fullName evidence="2">ATP/GTP-binding protein 1</fullName>
    </alternativeName>
    <alternativeName>
        <fullName evidence="6">Protein deglutamylase CCP1</fullName>
    </alternativeName>
</protein>
<reference key="1">
    <citation type="journal article" date="2004" name="Nature">
        <title>Sequence and comparative analysis of the chicken genome provide unique perspectives on vertebrate evolution.</title>
        <authorList>
            <person name="Hillier L.W."/>
            <person name="Miller W."/>
            <person name="Birney E."/>
            <person name="Warren W."/>
            <person name="Hardison R.C."/>
            <person name="Ponting C.P."/>
            <person name="Bork P."/>
            <person name="Burt D.W."/>
            <person name="Groenen M.A.M."/>
            <person name="Delany M.E."/>
            <person name="Dodgson J.B."/>
            <person name="Chinwalla A.T."/>
            <person name="Cliften P.F."/>
            <person name="Clifton S.W."/>
            <person name="Delehaunty K.D."/>
            <person name="Fronick C."/>
            <person name="Fulton R.S."/>
            <person name="Graves T.A."/>
            <person name="Kremitzki C."/>
            <person name="Layman D."/>
            <person name="Magrini V."/>
            <person name="McPherson J.D."/>
            <person name="Miner T.L."/>
            <person name="Minx P."/>
            <person name="Nash W.E."/>
            <person name="Nhan M.N."/>
            <person name="Nelson J.O."/>
            <person name="Oddy L.G."/>
            <person name="Pohl C.S."/>
            <person name="Randall-Maher J."/>
            <person name="Smith S.M."/>
            <person name="Wallis J.W."/>
            <person name="Yang S.-P."/>
            <person name="Romanov M.N."/>
            <person name="Rondelli C.M."/>
            <person name="Paton B."/>
            <person name="Smith J."/>
            <person name="Morrice D."/>
            <person name="Daniels L."/>
            <person name="Tempest H.G."/>
            <person name="Robertson L."/>
            <person name="Masabanda J.S."/>
            <person name="Griffin D.K."/>
            <person name="Vignal A."/>
            <person name="Fillon V."/>
            <person name="Jacobbson L."/>
            <person name="Kerje S."/>
            <person name="Andersson L."/>
            <person name="Crooijmans R.P."/>
            <person name="Aerts J."/>
            <person name="van der Poel J.J."/>
            <person name="Ellegren H."/>
            <person name="Caldwell R.B."/>
            <person name="Hubbard S.J."/>
            <person name="Grafham D.V."/>
            <person name="Kierzek A.M."/>
            <person name="McLaren S.R."/>
            <person name="Overton I.M."/>
            <person name="Arakawa H."/>
            <person name="Beattie K.J."/>
            <person name="Bezzubov Y."/>
            <person name="Boardman P.E."/>
            <person name="Bonfield J.K."/>
            <person name="Croning M.D.R."/>
            <person name="Davies R.M."/>
            <person name="Francis M.D."/>
            <person name="Humphray S.J."/>
            <person name="Scott C.E."/>
            <person name="Taylor R.G."/>
            <person name="Tickle C."/>
            <person name="Brown W.R.A."/>
            <person name="Rogers J."/>
            <person name="Buerstedde J.-M."/>
            <person name="Wilson S.A."/>
            <person name="Stubbs L."/>
            <person name="Ovcharenko I."/>
            <person name="Gordon L."/>
            <person name="Lucas S."/>
            <person name="Miller M.M."/>
            <person name="Inoko H."/>
            <person name="Shiina T."/>
            <person name="Kaufman J."/>
            <person name="Salomonsen J."/>
            <person name="Skjoedt K."/>
            <person name="Wong G.K.-S."/>
            <person name="Wang J."/>
            <person name="Liu B."/>
            <person name="Wang J."/>
            <person name="Yu J."/>
            <person name="Yang H."/>
            <person name="Nefedov M."/>
            <person name="Koriabine M."/>
            <person name="Dejong P.J."/>
            <person name="Goodstadt L."/>
            <person name="Webber C."/>
            <person name="Dickens N.J."/>
            <person name="Letunic I."/>
            <person name="Suyama M."/>
            <person name="Torrents D."/>
            <person name="von Mering C."/>
            <person name="Zdobnov E.M."/>
            <person name="Makova K."/>
            <person name="Nekrutenko A."/>
            <person name="Elnitski L."/>
            <person name="Eswara P."/>
            <person name="King D.C."/>
            <person name="Yang S.-P."/>
            <person name="Tyekucheva S."/>
            <person name="Radakrishnan A."/>
            <person name="Harris R.S."/>
            <person name="Chiaromonte F."/>
            <person name="Taylor J."/>
            <person name="He J."/>
            <person name="Rijnkels M."/>
            <person name="Griffiths-Jones S."/>
            <person name="Ureta-Vidal A."/>
            <person name="Hoffman M.M."/>
            <person name="Severin J."/>
            <person name="Searle S.M.J."/>
            <person name="Law A.S."/>
            <person name="Speed D."/>
            <person name="Waddington D."/>
            <person name="Cheng Z."/>
            <person name="Tuzun E."/>
            <person name="Eichler E."/>
            <person name="Bao Z."/>
            <person name="Flicek P."/>
            <person name="Shteynberg D.D."/>
            <person name="Brent M.R."/>
            <person name="Bye J.M."/>
            <person name="Huckle E.J."/>
            <person name="Chatterji S."/>
            <person name="Dewey C."/>
            <person name="Pachter L."/>
            <person name="Kouranov A."/>
            <person name="Mourelatos Z."/>
            <person name="Hatzigeorgiou A.G."/>
            <person name="Paterson A.H."/>
            <person name="Ivarie R."/>
            <person name="Brandstrom M."/>
            <person name="Axelsson E."/>
            <person name="Backstrom N."/>
            <person name="Berlin S."/>
            <person name="Webster M.T."/>
            <person name="Pourquie O."/>
            <person name="Reymond A."/>
            <person name="Ucla C."/>
            <person name="Antonarakis S.E."/>
            <person name="Long M."/>
            <person name="Emerson J.J."/>
            <person name="Betran E."/>
            <person name="Dupanloup I."/>
            <person name="Kaessmann H."/>
            <person name="Hinrichs A.S."/>
            <person name="Bejerano G."/>
            <person name="Furey T.S."/>
            <person name="Harte R.A."/>
            <person name="Raney B."/>
            <person name="Siepel A."/>
            <person name="Kent W.J."/>
            <person name="Haussler D."/>
            <person name="Eyras E."/>
            <person name="Castelo R."/>
            <person name="Abril J.F."/>
            <person name="Castellano S."/>
            <person name="Camara F."/>
            <person name="Parra G."/>
            <person name="Guigo R."/>
            <person name="Bourque G."/>
            <person name="Tesler G."/>
            <person name="Pevzner P.A."/>
            <person name="Smit A."/>
            <person name="Fulton L.A."/>
            <person name="Mardis E.R."/>
            <person name="Wilson R.K."/>
        </authorList>
    </citation>
    <scope>NUCLEOTIDE SEQUENCE [LARGE SCALE GENOMIC DNA]</scope>
</reference>
<organism>
    <name type="scientific">Gallus gallus</name>
    <name type="common">Chicken</name>
    <dbReference type="NCBI Taxonomy" id="9031"/>
    <lineage>
        <taxon>Eukaryota</taxon>
        <taxon>Metazoa</taxon>
        <taxon>Chordata</taxon>
        <taxon>Craniata</taxon>
        <taxon>Vertebrata</taxon>
        <taxon>Euteleostomi</taxon>
        <taxon>Archelosauria</taxon>
        <taxon>Archosauria</taxon>
        <taxon>Dinosauria</taxon>
        <taxon>Saurischia</taxon>
        <taxon>Theropoda</taxon>
        <taxon>Coelurosauria</taxon>
        <taxon>Aves</taxon>
        <taxon>Neognathae</taxon>
        <taxon>Galloanserae</taxon>
        <taxon>Galliformes</taxon>
        <taxon>Phasianidae</taxon>
        <taxon>Phasianinae</taxon>
        <taxon>Gallus</taxon>
    </lineage>
</organism>
<comment type="function">
    <text evidence="2">Metallocarboxypeptidase that mediates protein deglutamylation of tubulin and non-tubulin target proteins. Catalyzes the removal of polyglutamate side chains present on the gamma-carboxyl group of glutamate residues within the C-terminal tail of alpha- and beta-tubulin. Specifically cleaves tubulin long-side-chains, while it is not able to remove the branching point glutamate. Also catalyzes the removal of polyglutamate residues from the carboxy-terminus of alpha-tubulin as well as non-tubulin proteins.</text>
</comment>
<comment type="catalytic activity">
    <reaction evidence="2">
        <text>(L-glutamyl)(n+1)-gamma-L-glutamyl-L-glutamyl-[protein] + H2O = (L-glutamyl)(n)-gamma-L-glutamyl-L-glutamyl-[protein] + L-glutamate</text>
        <dbReference type="Rhea" id="RHEA:60004"/>
        <dbReference type="Rhea" id="RHEA-COMP:15519"/>
        <dbReference type="Rhea" id="RHEA-COMP:15675"/>
        <dbReference type="ChEBI" id="CHEBI:15377"/>
        <dbReference type="ChEBI" id="CHEBI:29985"/>
        <dbReference type="ChEBI" id="CHEBI:143623"/>
    </reaction>
    <physiologicalReaction direction="left-to-right" evidence="2">
        <dbReference type="Rhea" id="RHEA:60005"/>
    </physiologicalReaction>
</comment>
<comment type="catalytic activity">
    <reaction evidence="2">
        <text>C-terminal L-alpha-aminoacyl-L-glutamyl-L-glutamyl-[tubulin] + H2O = C-terminal L-alpha-aminoacyl-L-glutamyl-[tubulin] + L-glutamate</text>
        <dbReference type="Rhea" id="RHEA:63792"/>
        <dbReference type="Rhea" id="RHEA-COMP:16435"/>
        <dbReference type="Rhea" id="RHEA-COMP:16436"/>
        <dbReference type="ChEBI" id="CHEBI:15377"/>
        <dbReference type="ChEBI" id="CHEBI:29985"/>
        <dbReference type="ChEBI" id="CHEBI:149555"/>
        <dbReference type="ChEBI" id="CHEBI:149556"/>
        <dbReference type="EC" id="3.4.17.24"/>
    </reaction>
    <physiologicalReaction direction="left-to-right" evidence="2">
        <dbReference type="Rhea" id="RHEA:63793"/>
    </physiologicalReaction>
</comment>
<comment type="cofactor">
    <cofactor evidence="1">
        <name>Zn(2+)</name>
        <dbReference type="ChEBI" id="CHEBI:29105"/>
    </cofactor>
    <text evidence="1">Binds 1 zinc ion per subunit.</text>
</comment>
<comment type="subcellular location">
    <subcellularLocation>
        <location evidence="3">Cytoplasm</location>
    </subcellularLocation>
    <subcellularLocation>
        <location evidence="2">Cytoplasm</location>
        <location evidence="2">Cytosol</location>
    </subcellularLocation>
    <subcellularLocation>
        <location evidence="2">Nucleus</location>
    </subcellularLocation>
    <subcellularLocation>
        <location evidence="2">Mitochondrion</location>
    </subcellularLocation>
</comment>
<comment type="similarity">
    <text evidence="6">Belongs to the peptidase M14 family.</text>
</comment>
<proteinExistence type="inferred from homology"/>
<sequence length="1224" mass="137742">MKVKKNLTCSVSTSSRTMSLLSQLEKINLDSVLGEADNARYVTAKILHLVQSQEKTKKEMTSKGSSAIEVILSTLENTRDPQTILNILSILIELVSVGGGRRASVLVTKGGTQILLQLLLNASKESPPNEELMVLLHTLLAKIGPKDKKIGMKARINGALNISLNLVKQNLQNHRLILPCLQVLRVYSTNSVNAVSLGKNGVVELMFKIIGPFSKKNTSLMKVALDTLAALLKSKTNARRAVDRGYVHMLLTIYVDWHRHDSRHRYMLIRKGVLQCIKSVTNIKLGRKAFIDANGMKILYNTSQECLAVRTLDPLVNTSSLIMRKCFPKNRLPLPTIKSAFHFQLPVIPASGPVAQMYNLPPDVDDVVDESDDNDDAETESEIETEDDKDQNFKNDDIETDINKLKPRQELGRPLEELKMYEQFFPELTENFQECDLVSKEPKPFVSNANLGGPIVVPTAGEEFSAETNPSVIGISLKEGNPLLTEEYNRRPAFLGLPKKDSIKASSLLQQNVQRNLLPSCQCLSQEIVTGLDRISLQNTSENDQYYATGCVIKKDNKTSLTPLACSKTCEHVSPCGSSLFEGSSVHLGKFCCTGVESEEEDSKSSSSGEQVVLEVSDVSPVHDCDLYIEMVKTTKSIPEYSEVAYPDYFGHIPPPFKEPILERPYGVQRTKISQDIERLIHQNDIIDRVVYDLDNSICSAPEEVDVLKFNSKFESGNLRKVIQIRKNEYDLILNSDINSNHYHQWFYFEVSGMKTGIGYRFNIINCEKSNSQFNYGMQPLMYSVQEALNSRPSWTRVGTDICYYKNHFSRSSIAAGGQKGKSYYTITFTVTFQHKDDVCYFAYHYPYTYSTLKMHLQKLESMHNPQQIYFRQDALCETLGGNICPIVTITAMPESNYYEHICQFRNRPYIFLSARVHPGETNASWVMKGTLEYLMSSNPSAQSLRESYIFKIIPMLNPDGVINGNHRCSLSGEDLNRQWQNPNPDLHPTIYHAKGLLQYLAAIKRLPLVYCDYHGHSRKKNVFMYGCSIKETMWHTNVNTASCDLMEDPGYRVLPKILSQTAPAFCMGSCSFVVEKSKESTARVVVWREIGVQRSYTMESTLCGCDQGKYKGLQIGTKELEEMGAKFCVGLLRLKRMASPLEYNLPSGLLDIENELIESSCKVTSPTTYVLDEDEPRFLEEVDYSAESNDDQDAELADNVGDYEANNQEDGLSDSDSTRILLS</sequence>
<name>CBPC1_CHICK</name>
<dbReference type="EC" id="3.4.17.-" evidence="2"/>
<dbReference type="EC" id="3.4.17.24" evidence="2"/>
<dbReference type="EMBL" id="AADN02064844">
    <property type="status" value="NOT_ANNOTATED_CDS"/>
    <property type="molecule type" value="Genomic_DNA"/>
</dbReference>
<dbReference type="EMBL" id="AADN02064845">
    <property type="status" value="NOT_ANNOTATED_CDS"/>
    <property type="molecule type" value="Genomic_DNA"/>
</dbReference>
<dbReference type="EMBL" id="AADN02064846">
    <property type="status" value="NOT_ANNOTATED_CDS"/>
    <property type="molecule type" value="Genomic_DNA"/>
</dbReference>
<dbReference type="EMBL" id="AADN02064847">
    <property type="status" value="NOT_ANNOTATED_CDS"/>
    <property type="molecule type" value="Genomic_DNA"/>
</dbReference>
<dbReference type="EMBL" id="AADN02064848">
    <property type="status" value="NOT_ANNOTATED_CDS"/>
    <property type="molecule type" value="Genomic_DNA"/>
</dbReference>
<dbReference type="EMBL" id="AADN02064849">
    <property type="status" value="NOT_ANNOTATED_CDS"/>
    <property type="molecule type" value="Genomic_DNA"/>
</dbReference>
<dbReference type="EMBL" id="AADN02064850">
    <property type="status" value="NOT_ANNOTATED_CDS"/>
    <property type="molecule type" value="Genomic_DNA"/>
</dbReference>
<dbReference type="EMBL" id="AADN02064851">
    <property type="status" value="NOT_ANNOTATED_CDS"/>
    <property type="molecule type" value="Genomic_DNA"/>
</dbReference>
<dbReference type="SMR" id="E1C3P4"/>
<dbReference type="FunCoup" id="E1C3P4">
    <property type="interactions" value="833"/>
</dbReference>
<dbReference type="STRING" id="9031.ENSGALP00000020540"/>
<dbReference type="PaxDb" id="9031-ENSGALP00000020540"/>
<dbReference type="VEuPathDB" id="HostDB:geneid_427460"/>
<dbReference type="eggNOG" id="KOG3641">
    <property type="taxonomic scope" value="Eukaryota"/>
</dbReference>
<dbReference type="InParanoid" id="E1C3P4"/>
<dbReference type="OrthoDB" id="10253041at2759"/>
<dbReference type="PhylomeDB" id="E1C3P4"/>
<dbReference type="TreeFam" id="TF313794"/>
<dbReference type="Proteomes" id="UP000000539">
    <property type="component" value="Unassembled WGS sequence"/>
</dbReference>
<dbReference type="GO" id="GO:0005737">
    <property type="term" value="C:cytoplasm"/>
    <property type="evidence" value="ECO:0000250"/>
    <property type="project" value="UniProtKB"/>
</dbReference>
<dbReference type="GO" id="GO:0005829">
    <property type="term" value="C:cytosol"/>
    <property type="evidence" value="ECO:0000250"/>
    <property type="project" value="UniProtKB"/>
</dbReference>
<dbReference type="GO" id="GO:0015630">
    <property type="term" value="C:microtubule cytoskeleton"/>
    <property type="evidence" value="ECO:0000318"/>
    <property type="project" value="GO_Central"/>
</dbReference>
<dbReference type="GO" id="GO:0005739">
    <property type="term" value="C:mitochondrion"/>
    <property type="evidence" value="ECO:0000250"/>
    <property type="project" value="UniProtKB"/>
</dbReference>
<dbReference type="GO" id="GO:0005634">
    <property type="term" value="C:nucleus"/>
    <property type="evidence" value="ECO:0000250"/>
    <property type="project" value="UniProtKB"/>
</dbReference>
<dbReference type="GO" id="GO:0004181">
    <property type="term" value="F:metallocarboxypeptidase activity"/>
    <property type="evidence" value="ECO:0000250"/>
    <property type="project" value="UniProtKB"/>
</dbReference>
<dbReference type="GO" id="GO:0015631">
    <property type="term" value="F:tubulin binding"/>
    <property type="evidence" value="ECO:0000250"/>
    <property type="project" value="UniProtKB"/>
</dbReference>
<dbReference type="GO" id="GO:0008270">
    <property type="term" value="F:zinc ion binding"/>
    <property type="evidence" value="ECO:0007669"/>
    <property type="project" value="InterPro"/>
</dbReference>
<dbReference type="GO" id="GO:0035609">
    <property type="term" value="P:C-terminal protein deglutamylation"/>
    <property type="evidence" value="ECO:0000250"/>
    <property type="project" value="UniProtKB"/>
</dbReference>
<dbReference type="GO" id="GO:0021702">
    <property type="term" value="P:cerebellar Purkinje cell differentiation"/>
    <property type="evidence" value="ECO:0000250"/>
    <property type="project" value="UniProtKB"/>
</dbReference>
<dbReference type="GO" id="GO:0001754">
    <property type="term" value="P:eye photoreceptor cell differentiation"/>
    <property type="evidence" value="ECO:0000250"/>
    <property type="project" value="UniProtKB"/>
</dbReference>
<dbReference type="GO" id="GO:0007005">
    <property type="term" value="P:mitochondrion organization"/>
    <property type="evidence" value="ECO:0000250"/>
    <property type="project" value="UniProtKB"/>
</dbReference>
<dbReference type="GO" id="GO:0050905">
    <property type="term" value="P:neuromuscular process"/>
    <property type="evidence" value="ECO:0000250"/>
    <property type="project" value="UniProtKB"/>
</dbReference>
<dbReference type="GO" id="GO:0021772">
    <property type="term" value="P:olfactory bulb development"/>
    <property type="evidence" value="ECO:0000250"/>
    <property type="project" value="UniProtKB"/>
</dbReference>
<dbReference type="GO" id="GO:0035610">
    <property type="term" value="P:protein side chain deglutamylation"/>
    <property type="evidence" value="ECO:0000250"/>
    <property type="project" value="UniProtKB"/>
</dbReference>
<dbReference type="GO" id="GO:0006508">
    <property type="term" value="P:proteolysis"/>
    <property type="evidence" value="ECO:0007669"/>
    <property type="project" value="UniProtKB-KW"/>
</dbReference>
<dbReference type="CDD" id="cd06906">
    <property type="entry name" value="M14_Nna1"/>
    <property type="match status" value="1"/>
</dbReference>
<dbReference type="FunFam" id="3.40.630.10:FF:000024">
    <property type="entry name" value="ATP/GTP binding protein 1"/>
    <property type="match status" value="1"/>
</dbReference>
<dbReference type="FunFam" id="1.25.10.10:FF:000125">
    <property type="entry name" value="cytosolic carboxypeptidase 1 isoform X1"/>
    <property type="match status" value="1"/>
</dbReference>
<dbReference type="FunFam" id="2.60.40.3120:FF:000001">
    <property type="entry name" value="cytosolic carboxypeptidase 1 isoform X1"/>
    <property type="match status" value="1"/>
</dbReference>
<dbReference type="Gene3D" id="2.60.40.3120">
    <property type="match status" value="1"/>
</dbReference>
<dbReference type="Gene3D" id="1.25.10.10">
    <property type="entry name" value="Leucine-rich Repeat Variant"/>
    <property type="match status" value="1"/>
</dbReference>
<dbReference type="Gene3D" id="3.40.630.10">
    <property type="entry name" value="Zn peptidases"/>
    <property type="match status" value="1"/>
</dbReference>
<dbReference type="InterPro" id="IPR011989">
    <property type="entry name" value="ARM-like"/>
</dbReference>
<dbReference type="InterPro" id="IPR016024">
    <property type="entry name" value="ARM-type_fold"/>
</dbReference>
<dbReference type="InterPro" id="IPR033852">
    <property type="entry name" value="CBPC1/4"/>
</dbReference>
<dbReference type="InterPro" id="IPR050821">
    <property type="entry name" value="Cytosolic_carboxypeptidase"/>
</dbReference>
<dbReference type="InterPro" id="IPR040626">
    <property type="entry name" value="Pepdidase_M14_N"/>
</dbReference>
<dbReference type="InterPro" id="IPR000834">
    <property type="entry name" value="Peptidase_M14"/>
</dbReference>
<dbReference type="PANTHER" id="PTHR12756">
    <property type="entry name" value="CYTOSOLIC CARBOXYPEPTIDASE"/>
    <property type="match status" value="1"/>
</dbReference>
<dbReference type="PANTHER" id="PTHR12756:SF24">
    <property type="entry name" value="CYTOSOLIC CARBOXYPEPTIDASE 1"/>
    <property type="match status" value="1"/>
</dbReference>
<dbReference type="Pfam" id="PF18027">
    <property type="entry name" value="Pepdidase_M14_N"/>
    <property type="match status" value="1"/>
</dbReference>
<dbReference type="Pfam" id="PF00246">
    <property type="entry name" value="Peptidase_M14"/>
    <property type="match status" value="1"/>
</dbReference>
<dbReference type="SUPFAM" id="SSF48371">
    <property type="entry name" value="ARM repeat"/>
    <property type="match status" value="1"/>
</dbReference>
<dbReference type="SUPFAM" id="SSF53187">
    <property type="entry name" value="Zn-dependent exopeptidases"/>
    <property type="match status" value="1"/>
</dbReference>
<dbReference type="PROSITE" id="PS52035">
    <property type="entry name" value="PEPTIDASE_M14"/>
    <property type="match status" value="1"/>
</dbReference>
<feature type="chain" id="PRO_0000403756" description="Cytosolic carboxypeptidase 1">
    <location>
        <begin position="1"/>
        <end position="1224"/>
    </location>
</feature>
<feature type="domain" description="Peptidase M14" evidence="4">
    <location>
        <begin position="846"/>
        <end position="1136"/>
    </location>
</feature>
<feature type="region of interest" description="Disordered" evidence="5">
    <location>
        <begin position="361"/>
        <end position="398"/>
    </location>
</feature>
<feature type="region of interest" description="Disordered" evidence="5">
    <location>
        <begin position="1186"/>
        <end position="1224"/>
    </location>
</feature>
<feature type="compositionally biased region" description="Acidic residues" evidence="5">
    <location>
        <begin position="363"/>
        <end position="389"/>
    </location>
</feature>
<feature type="compositionally biased region" description="Acidic residues" evidence="5">
    <location>
        <begin position="1186"/>
        <end position="1197"/>
    </location>
</feature>
<feature type="compositionally biased region" description="Polar residues" evidence="5">
    <location>
        <begin position="1206"/>
        <end position="1224"/>
    </location>
</feature>
<feature type="active site" description="Proton donor/acceptor" evidence="4">
    <location>
        <position position="1100"/>
    </location>
</feature>
<feature type="binding site" evidence="4">
    <location>
        <position position="918"/>
    </location>
    <ligand>
        <name>Zn(2+)</name>
        <dbReference type="ChEBI" id="CHEBI:29105"/>
        <note>catalytic</note>
    </ligand>
</feature>
<feature type="binding site" evidence="4">
    <location>
        <position position="921"/>
    </location>
    <ligand>
        <name>Zn(2+)</name>
        <dbReference type="ChEBI" id="CHEBI:29105"/>
        <note>catalytic</note>
    </ligand>
</feature>
<feature type="binding site" evidence="4">
    <location>
        <position position="1015"/>
    </location>
    <ligand>
        <name>Zn(2+)</name>
        <dbReference type="ChEBI" id="CHEBI:29105"/>
        <note>catalytic</note>
    </ligand>
</feature>
<keyword id="KW-0121">Carboxypeptidase</keyword>
<keyword id="KW-0963">Cytoplasm</keyword>
<keyword id="KW-0378">Hydrolase</keyword>
<keyword id="KW-0479">Metal-binding</keyword>
<keyword id="KW-0482">Metalloprotease</keyword>
<keyword id="KW-0496">Mitochondrion</keyword>
<keyword id="KW-0539">Nucleus</keyword>
<keyword id="KW-0645">Protease</keyword>
<keyword id="KW-1185">Reference proteome</keyword>
<keyword id="KW-0862">Zinc</keyword>
<gene>
    <name type="primary">AGTPBP1</name>
    <name type="synonym">CCP1K</name>
</gene>
<evidence type="ECO:0000250" key="1"/>
<evidence type="ECO:0000250" key="2">
    <source>
        <dbReference type="UniProtKB" id="Q641K1"/>
    </source>
</evidence>
<evidence type="ECO:0000250" key="3">
    <source>
        <dbReference type="UniProtKB" id="Q9UPW5"/>
    </source>
</evidence>
<evidence type="ECO:0000255" key="4">
    <source>
        <dbReference type="PROSITE-ProRule" id="PRU01379"/>
    </source>
</evidence>
<evidence type="ECO:0000256" key="5">
    <source>
        <dbReference type="SAM" id="MobiDB-lite"/>
    </source>
</evidence>
<evidence type="ECO:0000305" key="6"/>